<feature type="chain" id="PRO_0000223991" description="Large ribosomal subunit protein uL6">
    <location>
        <begin position="1"/>
        <end position="178"/>
    </location>
</feature>
<name>RL6_STAES</name>
<organism>
    <name type="scientific">Staphylococcus epidermidis (strain ATCC 12228 / FDA PCI 1200)</name>
    <dbReference type="NCBI Taxonomy" id="176280"/>
    <lineage>
        <taxon>Bacteria</taxon>
        <taxon>Bacillati</taxon>
        <taxon>Bacillota</taxon>
        <taxon>Bacilli</taxon>
        <taxon>Bacillales</taxon>
        <taxon>Staphylococcaceae</taxon>
        <taxon>Staphylococcus</taxon>
    </lineage>
</organism>
<accession>Q8CRH5</accession>
<sequence>MSRVGKKIIDIPSDVTVTFDGSHVTVKGPKGELERTLNERMTFKQEENTVEVVRPSDSKEDRTDHGTTRALLNNMVLGVSQGYEKTLELVGVGYRAQMQGKDLVLNVGYSHPVEIKAEEGITFAVEKNTTVKVSGVSKEQVGAIASNIRSVRPPEPYKGKGIRYQGEYVRRKEGKTGK</sequence>
<keyword id="KW-0687">Ribonucleoprotein</keyword>
<keyword id="KW-0689">Ribosomal protein</keyword>
<keyword id="KW-0694">RNA-binding</keyword>
<keyword id="KW-0699">rRNA-binding</keyword>
<dbReference type="EMBL" id="AE015929">
    <property type="protein sequence ID" value="AAO05449.1"/>
    <property type="molecule type" value="Genomic_DNA"/>
</dbReference>
<dbReference type="RefSeq" id="NP_765363.1">
    <property type="nucleotide sequence ID" value="NC_004461.1"/>
</dbReference>
<dbReference type="RefSeq" id="WP_001829740.1">
    <property type="nucleotide sequence ID" value="NZ_WBME01000007.1"/>
</dbReference>
<dbReference type="SMR" id="Q8CRH5"/>
<dbReference type="GeneID" id="50018088"/>
<dbReference type="KEGG" id="sep:SE_1808"/>
<dbReference type="PATRIC" id="fig|176280.10.peg.1765"/>
<dbReference type="eggNOG" id="COG0097">
    <property type="taxonomic scope" value="Bacteria"/>
</dbReference>
<dbReference type="HOGENOM" id="CLU_065464_1_2_9"/>
<dbReference type="OrthoDB" id="9805007at2"/>
<dbReference type="Proteomes" id="UP000001411">
    <property type="component" value="Chromosome"/>
</dbReference>
<dbReference type="GO" id="GO:0022625">
    <property type="term" value="C:cytosolic large ribosomal subunit"/>
    <property type="evidence" value="ECO:0007669"/>
    <property type="project" value="TreeGrafter"/>
</dbReference>
<dbReference type="GO" id="GO:0019843">
    <property type="term" value="F:rRNA binding"/>
    <property type="evidence" value="ECO:0007669"/>
    <property type="project" value="UniProtKB-UniRule"/>
</dbReference>
<dbReference type="GO" id="GO:0003735">
    <property type="term" value="F:structural constituent of ribosome"/>
    <property type="evidence" value="ECO:0007669"/>
    <property type="project" value="InterPro"/>
</dbReference>
<dbReference type="GO" id="GO:0002181">
    <property type="term" value="P:cytoplasmic translation"/>
    <property type="evidence" value="ECO:0007669"/>
    <property type="project" value="TreeGrafter"/>
</dbReference>
<dbReference type="FunFam" id="3.90.930.12:FF:000001">
    <property type="entry name" value="50S ribosomal protein L6"/>
    <property type="match status" value="1"/>
</dbReference>
<dbReference type="FunFam" id="3.90.930.12:FF:000002">
    <property type="entry name" value="50S ribosomal protein L6"/>
    <property type="match status" value="1"/>
</dbReference>
<dbReference type="Gene3D" id="3.90.930.12">
    <property type="entry name" value="Ribosomal protein L6, alpha-beta domain"/>
    <property type="match status" value="2"/>
</dbReference>
<dbReference type="HAMAP" id="MF_01365_B">
    <property type="entry name" value="Ribosomal_uL6_B"/>
    <property type="match status" value="1"/>
</dbReference>
<dbReference type="InterPro" id="IPR000702">
    <property type="entry name" value="Ribosomal_uL6-like"/>
</dbReference>
<dbReference type="InterPro" id="IPR036789">
    <property type="entry name" value="Ribosomal_uL6-like_a/b-dom_sf"/>
</dbReference>
<dbReference type="InterPro" id="IPR020040">
    <property type="entry name" value="Ribosomal_uL6_a/b-dom"/>
</dbReference>
<dbReference type="InterPro" id="IPR019906">
    <property type="entry name" value="Ribosomal_uL6_bac-type"/>
</dbReference>
<dbReference type="InterPro" id="IPR002358">
    <property type="entry name" value="Ribosomal_uL6_CS"/>
</dbReference>
<dbReference type="NCBIfam" id="TIGR03654">
    <property type="entry name" value="L6_bact"/>
    <property type="match status" value="1"/>
</dbReference>
<dbReference type="PANTHER" id="PTHR11655">
    <property type="entry name" value="60S/50S RIBOSOMAL PROTEIN L6/L9"/>
    <property type="match status" value="1"/>
</dbReference>
<dbReference type="PANTHER" id="PTHR11655:SF14">
    <property type="entry name" value="LARGE RIBOSOMAL SUBUNIT PROTEIN UL6M"/>
    <property type="match status" value="1"/>
</dbReference>
<dbReference type="Pfam" id="PF00347">
    <property type="entry name" value="Ribosomal_L6"/>
    <property type="match status" value="2"/>
</dbReference>
<dbReference type="PIRSF" id="PIRSF002162">
    <property type="entry name" value="Ribosomal_L6"/>
    <property type="match status" value="1"/>
</dbReference>
<dbReference type="PRINTS" id="PR00059">
    <property type="entry name" value="RIBOSOMALL6"/>
</dbReference>
<dbReference type="SUPFAM" id="SSF56053">
    <property type="entry name" value="Ribosomal protein L6"/>
    <property type="match status" value="2"/>
</dbReference>
<dbReference type="PROSITE" id="PS00525">
    <property type="entry name" value="RIBOSOMAL_L6_1"/>
    <property type="match status" value="1"/>
</dbReference>
<gene>
    <name evidence="1" type="primary">rplF</name>
    <name type="ordered locus">SE_1808</name>
</gene>
<proteinExistence type="inferred from homology"/>
<protein>
    <recommendedName>
        <fullName evidence="1">Large ribosomal subunit protein uL6</fullName>
    </recommendedName>
    <alternativeName>
        <fullName evidence="2">50S ribosomal protein L6</fullName>
    </alternativeName>
</protein>
<comment type="function">
    <text evidence="1">This protein binds to the 23S rRNA, and is important in its secondary structure. It is located near the subunit interface in the base of the L7/L12 stalk, and near the tRNA binding site of the peptidyltransferase center.</text>
</comment>
<comment type="subunit">
    <text evidence="1">Part of the 50S ribosomal subunit.</text>
</comment>
<comment type="similarity">
    <text evidence="1">Belongs to the universal ribosomal protein uL6 family.</text>
</comment>
<evidence type="ECO:0000255" key="1">
    <source>
        <dbReference type="HAMAP-Rule" id="MF_01365"/>
    </source>
</evidence>
<evidence type="ECO:0000305" key="2"/>
<reference key="1">
    <citation type="journal article" date="2003" name="Mol. Microbiol.">
        <title>Genome-based analysis of virulence genes in a non-biofilm-forming Staphylococcus epidermidis strain (ATCC 12228).</title>
        <authorList>
            <person name="Zhang Y.-Q."/>
            <person name="Ren S.-X."/>
            <person name="Li H.-L."/>
            <person name="Wang Y.-X."/>
            <person name="Fu G."/>
            <person name="Yang J."/>
            <person name="Qin Z.-Q."/>
            <person name="Miao Y.-G."/>
            <person name="Wang W.-Y."/>
            <person name="Chen R.-S."/>
            <person name="Shen Y."/>
            <person name="Chen Z."/>
            <person name="Yuan Z.-H."/>
            <person name="Zhao G.-P."/>
            <person name="Qu D."/>
            <person name="Danchin A."/>
            <person name="Wen Y.-M."/>
        </authorList>
    </citation>
    <scope>NUCLEOTIDE SEQUENCE [LARGE SCALE GENOMIC DNA]</scope>
    <source>
        <strain>ATCC 12228 / FDA PCI 1200</strain>
    </source>
</reference>